<reference key="1">
    <citation type="submission" date="2007-02" db="EMBL/GenBank/DDBJ databases">
        <title>Complete sequence of chromosome 1 of Rhodobacter sphaeroides ATCC 17029.</title>
        <authorList>
            <person name="Copeland A."/>
            <person name="Lucas S."/>
            <person name="Lapidus A."/>
            <person name="Barry K."/>
            <person name="Detter J.C."/>
            <person name="Glavina del Rio T."/>
            <person name="Hammon N."/>
            <person name="Israni S."/>
            <person name="Dalin E."/>
            <person name="Tice H."/>
            <person name="Pitluck S."/>
            <person name="Kiss H."/>
            <person name="Brettin T."/>
            <person name="Bruce D."/>
            <person name="Han C."/>
            <person name="Tapia R."/>
            <person name="Gilna P."/>
            <person name="Schmutz J."/>
            <person name="Larimer F."/>
            <person name="Land M."/>
            <person name="Hauser L."/>
            <person name="Kyrpides N."/>
            <person name="Mikhailova N."/>
            <person name="Richardson P."/>
            <person name="Mackenzie C."/>
            <person name="Choudhary M."/>
            <person name="Donohue T.J."/>
            <person name="Kaplan S."/>
        </authorList>
    </citation>
    <scope>NUCLEOTIDE SEQUENCE [LARGE SCALE GENOMIC DNA]</scope>
    <source>
        <strain>ATCC 17029 / ATH 2.4.9</strain>
    </source>
</reference>
<organism>
    <name type="scientific">Cereibacter sphaeroides (strain ATCC 17029 / ATH 2.4.9)</name>
    <name type="common">Rhodobacter sphaeroides</name>
    <dbReference type="NCBI Taxonomy" id="349101"/>
    <lineage>
        <taxon>Bacteria</taxon>
        <taxon>Pseudomonadati</taxon>
        <taxon>Pseudomonadota</taxon>
        <taxon>Alphaproteobacteria</taxon>
        <taxon>Rhodobacterales</taxon>
        <taxon>Paracoccaceae</taxon>
        <taxon>Cereibacter</taxon>
    </lineage>
</organism>
<accession>A3PMM1</accession>
<proteinExistence type="inferred from homology"/>
<feature type="chain" id="PRO_1000052927" description="Large ribosomal subunit protein bL25">
    <location>
        <begin position="1"/>
        <end position="203"/>
    </location>
</feature>
<keyword id="KW-0687">Ribonucleoprotein</keyword>
<keyword id="KW-0689">Ribosomal protein</keyword>
<keyword id="KW-0694">RNA-binding</keyword>
<keyword id="KW-0699">rRNA-binding</keyword>
<evidence type="ECO:0000255" key="1">
    <source>
        <dbReference type="HAMAP-Rule" id="MF_01334"/>
    </source>
</evidence>
<evidence type="ECO:0000305" key="2"/>
<comment type="function">
    <text evidence="1">This is one of the proteins that binds to the 5S RNA in the ribosome where it forms part of the central protuberance.</text>
</comment>
<comment type="subunit">
    <text evidence="1">Part of the 50S ribosomal subunit; part of the 5S rRNA/L5/L18/L25 subcomplex. Contacts the 5S rRNA. Binds to the 5S rRNA independently of L5 and L18.</text>
</comment>
<comment type="similarity">
    <text evidence="1">Belongs to the bacterial ribosomal protein bL25 family. CTC subfamily.</text>
</comment>
<sequence length="203" mass="22472">MAGEIPDFQAEVRTGTGKGAARQARREGYVPGIVYGGGQEPLSINVPYNDLLNRLKKGRFLQTLFNLKVEGQEDVRVICRGVQRDVVKDLPTHVDFMRLRRTSRVNLFIHVTFENHDKAPGLKRGGTLTVVRPEVELEVTAGDIPDHLTVDLTDRQIGDVIHINDIKLPEGAVPTINRNFVIANISAPSGLRSSDNEEEAEEA</sequence>
<name>RL25_CERS1</name>
<protein>
    <recommendedName>
        <fullName evidence="1">Large ribosomal subunit protein bL25</fullName>
    </recommendedName>
    <alternativeName>
        <fullName evidence="2">50S ribosomal protein L25</fullName>
    </alternativeName>
    <alternativeName>
        <fullName evidence="1">General stress protein CTC</fullName>
    </alternativeName>
</protein>
<gene>
    <name evidence="1" type="primary">rplY</name>
    <name evidence="1" type="synonym">ctc</name>
    <name type="ordered locus">Rsph17029_2485</name>
</gene>
<dbReference type="EMBL" id="CP000577">
    <property type="protein sequence ID" value="ABN77587.1"/>
    <property type="molecule type" value="Genomic_DNA"/>
</dbReference>
<dbReference type="RefSeq" id="WP_002721014.1">
    <property type="nucleotide sequence ID" value="NC_009049.1"/>
</dbReference>
<dbReference type="SMR" id="A3PMM1"/>
<dbReference type="KEGG" id="rsh:Rsph17029_2485"/>
<dbReference type="HOGENOM" id="CLU_075939_0_0_5"/>
<dbReference type="GO" id="GO:0022625">
    <property type="term" value="C:cytosolic large ribosomal subunit"/>
    <property type="evidence" value="ECO:0007669"/>
    <property type="project" value="TreeGrafter"/>
</dbReference>
<dbReference type="GO" id="GO:0008097">
    <property type="term" value="F:5S rRNA binding"/>
    <property type="evidence" value="ECO:0007669"/>
    <property type="project" value="InterPro"/>
</dbReference>
<dbReference type="GO" id="GO:0003735">
    <property type="term" value="F:structural constituent of ribosome"/>
    <property type="evidence" value="ECO:0007669"/>
    <property type="project" value="InterPro"/>
</dbReference>
<dbReference type="GO" id="GO:0006412">
    <property type="term" value="P:translation"/>
    <property type="evidence" value="ECO:0007669"/>
    <property type="project" value="UniProtKB-UniRule"/>
</dbReference>
<dbReference type="CDD" id="cd00495">
    <property type="entry name" value="Ribosomal_L25_TL5_CTC"/>
    <property type="match status" value="1"/>
</dbReference>
<dbReference type="Gene3D" id="2.170.120.20">
    <property type="entry name" value="Ribosomal protein L25, beta domain"/>
    <property type="match status" value="1"/>
</dbReference>
<dbReference type="Gene3D" id="2.40.240.10">
    <property type="entry name" value="Ribosomal Protein L25, Chain P"/>
    <property type="match status" value="1"/>
</dbReference>
<dbReference type="HAMAP" id="MF_01334">
    <property type="entry name" value="Ribosomal_bL25_CTC"/>
    <property type="match status" value="1"/>
</dbReference>
<dbReference type="InterPro" id="IPR020056">
    <property type="entry name" value="Rbsml_bL25/Gln-tRNA_synth_N"/>
</dbReference>
<dbReference type="InterPro" id="IPR011035">
    <property type="entry name" value="Ribosomal_bL25/Gln-tRNA_synth"/>
</dbReference>
<dbReference type="InterPro" id="IPR020057">
    <property type="entry name" value="Ribosomal_bL25_b-dom"/>
</dbReference>
<dbReference type="InterPro" id="IPR037121">
    <property type="entry name" value="Ribosomal_bL25_C"/>
</dbReference>
<dbReference type="InterPro" id="IPR001021">
    <property type="entry name" value="Ribosomal_bL25_long"/>
</dbReference>
<dbReference type="InterPro" id="IPR029751">
    <property type="entry name" value="Ribosomal_L25_dom"/>
</dbReference>
<dbReference type="InterPro" id="IPR020930">
    <property type="entry name" value="Ribosomal_uL5_bac-type"/>
</dbReference>
<dbReference type="NCBIfam" id="TIGR00731">
    <property type="entry name" value="bL25_bact_ctc"/>
    <property type="match status" value="1"/>
</dbReference>
<dbReference type="NCBIfam" id="NF004128">
    <property type="entry name" value="PRK05618.1-2"/>
    <property type="match status" value="1"/>
</dbReference>
<dbReference type="NCBIfam" id="NF004612">
    <property type="entry name" value="PRK05943.1"/>
    <property type="match status" value="1"/>
</dbReference>
<dbReference type="PANTHER" id="PTHR33284">
    <property type="entry name" value="RIBOSOMAL PROTEIN L25/GLN-TRNA SYNTHETASE, ANTI-CODON-BINDING DOMAIN-CONTAINING PROTEIN"/>
    <property type="match status" value="1"/>
</dbReference>
<dbReference type="PANTHER" id="PTHR33284:SF1">
    <property type="entry name" value="RIBOSOMAL PROTEIN L25_GLN-TRNA SYNTHETASE, ANTI-CODON-BINDING DOMAIN-CONTAINING PROTEIN"/>
    <property type="match status" value="1"/>
</dbReference>
<dbReference type="Pfam" id="PF01386">
    <property type="entry name" value="Ribosomal_L25p"/>
    <property type="match status" value="1"/>
</dbReference>
<dbReference type="Pfam" id="PF14693">
    <property type="entry name" value="Ribosomal_TL5_C"/>
    <property type="match status" value="1"/>
</dbReference>
<dbReference type="SUPFAM" id="SSF50715">
    <property type="entry name" value="Ribosomal protein L25-like"/>
    <property type="match status" value="1"/>
</dbReference>